<keyword id="KW-0687">Ribonucleoprotein</keyword>
<keyword id="KW-0689">Ribosomal protein</keyword>
<protein>
    <recommendedName>
        <fullName evidence="1">Small ribosomal subunit protein eS24</fullName>
    </recommendedName>
    <alternativeName>
        <fullName evidence="3">30S ribosomal protein S24e</fullName>
    </alternativeName>
</protein>
<gene>
    <name evidence="1" type="primary">rps24e</name>
    <name type="ordered locus">LS215_1799</name>
</gene>
<organism>
    <name type="scientific">Saccharolobus islandicus (strain L.S.2.15 / Lassen #1)</name>
    <name type="common">Sulfolobus islandicus</name>
    <dbReference type="NCBI Taxonomy" id="429572"/>
    <lineage>
        <taxon>Archaea</taxon>
        <taxon>Thermoproteota</taxon>
        <taxon>Thermoprotei</taxon>
        <taxon>Sulfolobales</taxon>
        <taxon>Sulfolobaceae</taxon>
        <taxon>Saccharolobus</taxon>
    </lineage>
</organism>
<comment type="similarity">
    <text evidence="1">Belongs to the eukaryotic ribosomal protein eS24 family.</text>
</comment>
<feature type="chain" id="PRO_1000211961" description="Small ribosomal subunit protein eS24">
    <location>
        <begin position="1"/>
        <end position="120"/>
    </location>
</feature>
<feature type="region of interest" description="Disordered" evidence="2">
    <location>
        <begin position="101"/>
        <end position="120"/>
    </location>
</feature>
<accession>C3MQY2</accession>
<sequence length="120" mass="13125">MESQAKVKISDKAEGIIERDVQNAVIGRREISLKVYHMGSGTPSRKDIIKAIIQAFASQENLVVVRKISTSYGAGISNIKLHIYKSREILEKIEPKYLLDRDAGTKQKKGGSKGGQGAKG</sequence>
<proteinExistence type="inferred from homology"/>
<reference key="1">
    <citation type="journal article" date="2009" name="Proc. Natl. Acad. Sci. U.S.A.">
        <title>Biogeography of the Sulfolobus islandicus pan-genome.</title>
        <authorList>
            <person name="Reno M.L."/>
            <person name="Held N.L."/>
            <person name="Fields C.J."/>
            <person name="Burke P.V."/>
            <person name="Whitaker R.J."/>
        </authorList>
    </citation>
    <scope>NUCLEOTIDE SEQUENCE [LARGE SCALE GENOMIC DNA]</scope>
    <source>
        <strain>L.S.2.15 / Lassen #1</strain>
    </source>
</reference>
<dbReference type="EMBL" id="CP001399">
    <property type="protein sequence ID" value="ACP35795.1"/>
    <property type="molecule type" value="Genomic_DNA"/>
</dbReference>
<dbReference type="RefSeq" id="WP_012713901.1">
    <property type="nucleotide sequence ID" value="NC_012589.1"/>
</dbReference>
<dbReference type="SMR" id="C3MQY2"/>
<dbReference type="GeneID" id="7807475"/>
<dbReference type="KEGG" id="sis:LS215_1799"/>
<dbReference type="HOGENOM" id="CLU_107248_3_2_2"/>
<dbReference type="OrthoDB" id="27533at2157"/>
<dbReference type="Proteomes" id="UP000001747">
    <property type="component" value="Chromosome"/>
</dbReference>
<dbReference type="GO" id="GO:1990904">
    <property type="term" value="C:ribonucleoprotein complex"/>
    <property type="evidence" value="ECO:0007669"/>
    <property type="project" value="UniProtKB-KW"/>
</dbReference>
<dbReference type="GO" id="GO:0005840">
    <property type="term" value="C:ribosome"/>
    <property type="evidence" value="ECO:0007669"/>
    <property type="project" value="UniProtKB-KW"/>
</dbReference>
<dbReference type="GO" id="GO:0003735">
    <property type="term" value="F:structural constituent of ribosome"/>
    <property type="evidence" value="ECO:0007669"/>
    <property type="project" value="InterPro"/>
</dbReference>
<dbReference type="GO" id="GO:0006412">
    <property type="term" value="P:translation"/>
    <property type="evidence" value="ECO:0007669"/>
    <property type="project" value="UniProtKB-UniRule"/>
</dbReference>
<dbReference type="Gene3D" id="3.30.70.3370">
    <property type="match status" value="1"/>
</dbReference>
<dbReference type="HAMAP" id="MF_00545">
    <property type="entry name" value="Ribosomal_eS24"/>
    <property type="match status" value="1"/>
</dbReference>
<dbReference type="InterPro" id="IPR053709">
    <property type="entry name" value="eRP_eS24_sf"/>
</dbReference>
<dbReference type="InterPro" id="IPR001976">
    <property type="entry name" value="Ribosomal_eS24"/>
</dbReference>
<dbReference type="InterPro" id="IPR018098">
    <property type="entry name" value="Ribosomal_eS24_CS"/>
</dbReference>
<dbReference type="InterPro" id="IPR012678">
    <property type="entry name" value="Ribosomal_uL23/eL15/eS24_sf"/>
</dbReference>
<dbReference type="PANTHER" id="PTHR10496">
    <property type="entry name" value="40S RIBOSOMAL PROTEIN S24"/>
    <property type="match status" value="1"/>
</dbReference>
<dbReference type="Pfam" id="PF01282">
    <property type="entry name" value="Ribosomal_S24e"/>
    <property type="match status" value="1"/>
</dbReference>
<dbReference type="SUPFAM" id="SSF54189">
    <property type="entry name" value="Ribosomal proteins S24e, L23 and L15e"/>
    <property type="match status" value="1"/>
</dbReference>
<dbReference type="PROSITE" id="PS00529">
    <property type="entry name" value="RIBOSOMAL_S24E"/>
    <property type="match status" value="1"/>
</dbReference>
<name>RS24_SACI2</name>
<evidence type="ECO:0000255" key="1">
    <source>
        <dbReference type="HAMAP-Rule" id="MF_00545"/>
    </source>
</evidence>
<evidence type="ECO:0000256" key="2">
    <source>
        <dbReference type="SAM" id="MobiDB-lite"/>
    </source>
</evidence>
<evidence type="ECO:0000305" key="3"/>